<protein>
    <recommendedName>
        <fullName>Snake venom serine protease BthaTL</fullName>
        <shortName>SVSP</shortName>
        <ecNumber>3.4.21.-</ecNumber>
    </recommendedName>
</protein>
<comment type="function">
    <text evidence="1">Snake venom serine protease that may act in the hemostasis system of the prey.</text>
</comment>
<comment type="subunit">
    <text evidence="1">Monomer.</text>
</comment>
<comment type="subcellular location">
    <subcellularLocation>
        <location evidence="1">Secreted</location>
    </subcellularLocation>
</comment>
<comment type="tissue specificity">
    <text>Expressed by the venom gland.</text>
</comment>
<comment type="similarity">
    <text evidence="2">Belongs to the peptidase S1 family. Snake venom subfamily.</text>
</comment>
<name>VSPTL_BOTAL</name>
<feature type="chain" id="PRO_5000093473" description="Snake venom serine protease BthaTL">
    <location>
        <begin position="1"/>
        <end position="233"/>
    </location>
</feature>
<feature type="domain" description="Peptidase S1" evidence="2">
    <location>
        <begin position="1"/>
        <end position="224"/>
    </location>
</feature>
<feature type="active site" description="Charge relay system" evidence="1">
    <location>
        <position position="40"/>
    </location>
</feature>
<feature type="active site" description="Charge relay system" evidence="1">
    <location>
        <position position="85"/>
    </location>
</feature>
<feature type="active site" description="Charge relay system" evidence="1">
    <location>
        <position position="179"/>
    </location>
</feature>
<feature type="disulfide bond" evidence="2">
    <location>
        <begin position="7"/>
        <end position="138"/>
    </location>
</feature>
<feature type="disulfide bond" evidence="2">
    <location>
        <begin position="25"/>
        <end position="41"/>
    </location>
</feature>
<feature type="disulfide bond" evidence="2">
    <location>
        <begin position="73"/>
        <end position="231"/>
    </location>
</feature>
<feature type="disulfide bond" evidence="2">
    <location>
        <begin position="117"/>
        <end position="185"/>
    </location>
</feature>
<feature type="disulfide bond" evidence="2">
    <location>
        <begin position="149"/>
        <end position="164"/>
    </location>
</feature>
<feature type="disulfide bond" evidence="2">
    <location>
        <begin position="175"/>
        <end position="200"/>
    </location>
</feature>
<keyword id="KW-1015">Disulfide bond</keyword>
<keyword id="KW-1199">Hemostasis impairing toxin</keyword>
<keyword id="KW-0378">Hydrolase</keyword>
<keyword id="KW-0645">Protease</keyword>
<keyword id="KW-0964">Secreted</keyword>
<keyword id="KW-0720">Serine protease</keyword>
<keyword id="KW-0800">Toxin</keyword>
<proteinExistence type="evidence at transcript level"/>
<accession>Q6IWF1</accession>
<organism>
    <name type="scientific">Bothrops alternatus</name>
    <name type="common">Urutu</name>
    <name type="synonym">Rhinocerophis alternatus</name>
    <dbReference type="NCBI Taxonomy" id="64174"/>
    <lineage>
        <taxon>Eukaryota</taxon>
        <taxon>Metazoa</taxon>
        <taxon>Chordata</taxon>
        <taxon>Craniata</taxon>
        <taxon>Vertebrata</taxon>
        <taxon>Euteleostomi</taxon>
        <taxon>Lepidosauria</taxon>
        <taxon>Squamata</taxon>
        <taxon>Bifurcata</taxon>
        <taxon>Unidentata</taxon>
        <taxon>Episquamata</taxon>
        <taxon>Toxicofera</taxon>
        <taxon>Serpentes</taxon>
        <taxon>Colubroidea</taxon>
        <taxon>Viperidae</taxon>
        <taxon>Crotalinae</taxon>
        <taxon>Bothrops</taxon>
    </lineage>
</organism>
<evidence type="ECO:0000250" key="1"/>
<evidence type="ECO:0000255" key="2">
    <source>
        <dbReference type="PROSITE-ProRule" id="PRU00274"/>
    </source>
</evidence>
<dbReference type="EC" id="3.4.21.-"/>
<dbReference type="EMBL" id="AY618559">
    <property type="protein sequence ID" value="AAT40141.1"/>
    <property type="molecule type" value="mRNA"/>
</dbReference>
<dbReference type="SMR" id="Q6IWF1"/>
<dbReference type="MEROPS" id="S01.456"/>
<dbReference type="GO" id="GO:0005576">
    <property type="term" value="C:extracellular region"/>
    <property type="evidence" value="ECO:0007669"/>
    <property type="project" value="UniProtKB-SubCell"/>
</dbReference>
<dbReference type="GO" id="GO:0030141">
    <property type="term" value="C:secretory granule"/>
    <property type="evidence" value="ECO:0007669"/>
    <property type="project" value="TreeGrafter"/>
</dbReference>
<dbReference type="GO" id="GO:0004252">
    <property type="term" value="F:serine-type endopeptidase activity"/>
    <property type="evidence" value="ECO:0007669"/>
    <property type="project" value="InterPro"/>
</dbReference>
<dbReference type="GO" id="GO:0090729">
    <property type="term" value="F:toxin activity"/>
    <property type="evidence" value="ECO:0007669"/>
    <property type="project" value="UniProtKB-KW"/>
</dbReference>
<dbReference type="GO" id="GO:0006508">
    <property type="term" value="P:proteolysis"/>
    <property type="evidence" value="ECO:0007669"/>
    <property type="project" value="UniProtKB-KW"/>
</dbReference>
<dbReference type="CDD" id="cd00190">
    <property type="entry name" value="Tryp_SPc"/>
    <property type="match status" value="1"/>
</dbReference>
<dbReference type="FunFam" id="2.40.10.10:FF:000010">
    <property type="entry name" value="Kallikrein related peptidase 11"/>
    <property type="match status" value="1"/>
</dbReference>
<dbReference type="Gene3D" id="2.40.10.10">
    <property type="entry name" value="Trypsin-like serine proteases"/>
    <property type="match status" value="2"/>
</dbReference>
<dbReference type="InterPro" id="IPR009003">
    <property type="entry name" value="Peptidase_S1_PA"/>
</dbReference>
<dbReference type="InterPro" id="IPR043504">
    <property type="entry name" value="Peptidase_S1_PA_chymotrypsin"/>
</dbReference>
<dbReference type="InterPro" id="IPR001314">
    <property type="entry name" value="Peptidase_S1A"/>
</dbReference>
<dbReference type="InterPro" id="IPR001254">
    <property type="entry name" value="Trypsin_dom"/>
</dbReference>
<dbReference type="InterPro" id="IPR033116">
    <property type="entry name" value="TRYPSIN_SER"/>
</dbReference>
<dbReference type="PANTHER" id="PTHR24271:SF47">
    <property type="entry name" value="KALLIKREIN-1"/>
    <property type="match status" value="1"/>
</dbReference>
<dbReference type="PANTHER" id="PTHR24271">
    <property type="entry name" value="KALLIKREIN-RELATED"/>
    <property type="match status" value="1"/>
</dbReference>
<dbReference type="Pfam" id="PF00089">
    <property type="entry name" value="Trypsin"/>
    <property type="match status" value="1"/>
</dbReference>
<dbReference type="PRINTS" id="PR00722">
    <property type="entry name" value="CHYMOTRYPSIN"/>
</dbReference>
<dbReference type="SMART" id="SM00020">
    <property type="entry name" value="Tryp_SPc"/>
    <property type="match status" value="1"/>
</dbReference>
<dbReference type="SUPFAM" id="SSF50494">
    <property type="entry name" value="Trypsin-like serine proteases"/>
    <property type="match status" value="1"/>
</dbReference>
<dbReference type="PROSITE" id="PS50240">
    <property type="entry name" value="TRYPSIN_DOM"/>
    <property type="match status" value="1"/>
</dbReference>
<dbReference type="PROSITE" id="PS00135">
    <property type="entry name" value="TRYPSIN_SER"/>
    <property type="match status" value="1"/>
</dbReference>
<reference key="1">
    <citation type="journal article" date="2006" name="Comp. Biochem. Physiol.">
        <title>Insights into the substrate specificity of a novel snake venom serine peptidase by molecular modeling.</title>
        <authorList>
            <person name="Vitorino-Cardoso A.F."/>
            <person name="Pereira Ramos O.H."/>
            <person name="Homsi-Brandeburgo M.I."/>
            <person name="Selistre-de-Araujo H.S."/>
        </authorList>
    </citation>
    <scope>NUCLEOTIDE SEQUENCE [MRNA]</scope>
    <scope>3D-STRUCTURE MODELING</scope>
    <source>
        <tissue>Venom gland</tissue>
    </source>
</reference>
<sequence>VIGGDECDINEHRFLAFLYPGRFFCSGTLINQEWVLTVAHCDTISMRIYLGLHTRSVPNDDEEIRYPMEKFKCPNRKRSYIKDKDIMLIRLNRPVNDSPHIAPLSLPSNPPSVGSVCHVMGWGTTSPSKATYPDVPHCANINLVNDTMCHGAYNGLPVTSRKFCAGVLQGGIDTCVGDSGGPLICNGQFQGIVSWGGKVCARLPRPALYTKVFEYLPWIQSIIAGNTTATCPL</sequence>